<evidence type="ECO:0000255" key="1">
    <source>
        <dbReference type="HAMAP-Rule" id="MF_00040"/>
    </source>
</evidence>
<gene>
    <name evidence="1" type="primary">frr</name>
    <name type="synonym">rrf</name>
    <name type="ordered locus">SPy_0463</name>
    <name type="ordered locus">M5005_Spy0380</name>
</gene>
<organism>
    <name type="scientific">Streptococcus pyogenes serotype M1</name>
    <dbReference type="NCBI Taxonomy" id="301447"/>
    <lineage>
        <taxon>Bacteria</taxon>
        <taxon>Bacillati</taxon>
        <taxon>Bacillota</taxon>
        <taxon>Bacilli</taxon>
        <taxon>Lactobacillales</taxon>
        <taxon>Streptococcaceae</taxon>
        <taxon>Streptococcus</taxon>
    </lineage>
</organism>
<feature type="chain" id="PRO_0000167554" description="Ribosome-recycling factor">
    <location>
        <begin position="1"/>
        <end position="185"/>
    </location>
</feature>
<protein>
    <recommendedName>
        <fullName evidence="1">Ribosome-recycling factor</fullName>
        <shortName evidence="1">RRF</shortName>
    </recommendedName>
    <alternativeName>
        <fullName evidence="1">Ribosome-releasing factor</fullName>
    </alternativeName>
</protein>
<comment type="function">
    <text evidence="1">Responsible for the release of ribosomes from messenger RNA at the termination of protein biosynthesis. May increase the efficiency of translation by recycling ribosomes from one round of translation to another.</text>
</comment>
<comment type="subcellular location">
    <subcellularLocation>
        <location evidence="1">Cytoplasm</location>
    </subcellularLocation>
</comment>
<comment type="similarity">
    <text evidence="1">Belongs to the RRF family.</text>
</comment>
<dbReference type="EMBL" id="AE004092">
    <property type="protein sequence ID" value="AAK33477.1"/>
    <property type="molecule type" value="Genomic_DNA"/>
</dbReference>
<dbReference type="EMBL" id="CP000017">
    <property type="protein sequence ID" value="AAZ50998.1"/>
    <property type="molecule type" value="Genomic_DNA"/>
</dbReference>
<dbReference type="RefSeq" id="NP_268756.1">
    <property type="nucleotide sequence ID" value="NC_002737.2"/>
</dbReference>
<dbReference type="SMR" id="P68903"/>
<dbReference type="PaxDb" id="1314-HKU360_00409"/>
<dbReference type="KEGG" id="spy:SPy_0463"/>
<dbReference type="KEGG" id="spz:M5005_Spy0380"/>
<dbReference type="PATRIC" id="fig|160490.10.peg.391"/>
<dbReference type="HOGENOM" id="CLU_073981_2_0_9"/>
<dbReference type="OMA" id="FNPMNNG"/>
<dbReference type="Proteomes" id="UP000000750">
    <property type="component" value="Chromosome"/>
</dbReference>
<dbReference type="GO" id="GO:0005737">
    <property type="term" value="C:cytoplasm"/>
    <property type="evidence" value="ECO:0007669"/>
    <property type="project" value="UniProtKB-SubCell"/>
</dbReference>
<dbReference type="GO" id="GO:0043023">
    <property type="term" value="F:ribosomal large subunit binding"/>
    <property type="evidence" value="ECO:0007669"/>
    <property type="project" value="TreeGrafter"/>
</dbReference>
<dbReference type="GO" id="GO:0006415">
    <property type="term" value="P:translational termination"/>
    <property type="evidence" value="ECO:0007669"/>
    <property type="project" value="UniProtKB-UniRule"/>
</dbReference>
<dbReference type="CDD" id="cd00520">
    <property type="entry name" value="RRF"/>
    <property type="match status" value="1"/>
</dbReference>
<dbReference type="FunFam" id="1.10.132.20:FF:000001">
    <property type="entry name" value="Ribosome-recycling factor"/>
    <property type="match status" value="1"/>
</dbReference>
<dbReference type="FunFam" id="3.30.1360.40:FF:000001">
    <property type="entry name" value="Ribosome-recycling factor"/>
    <property type="match status" value="1"/>
</dbReference>
<dbReference type="Gene3D" id="3.30.1360.40">
    <property type="match status" value="1"/>
</dbReference>
<dbReference type="Gene3D" id="1.10.132.20">
    <property type="entry name" value="Ribosome-recycling factor"/>
    <property type="match status" value="1"/>
</dbReference>
<dbReference type="HAMAP" id="MF_00040">
    <property type="entry name" value="RRF"/>
    <property type="match status" value="1"/>
</dbReference>
<dbReference type="InterPro" id="IPR002661">
    <property type="entry name" value="Ribosome_recyc_fac"/>
</dbReference>
<dbReference type="InterPro" id="IPR023584">
    <property type="entry name" value="Ribosome_recyc_fac_dom"/>
</dbReference>
<dbReference type="InterPro" id="IPR036191">
    <property type="entry name" value="RRF_sf"/>
</dbReference>
<dbReference type="NCBIfam" id="TIGR00496">
    <property type="entry name" value="frr"/>
    <property type="match status" value="1"/>
</dbReference>
<dbReference type="PANTHER" id="PTHR20982:SF3">
    <property type="entry name" value="MITOCHONDRIAL RIBOSOME RECYCLING FACTOR PSEUDO 1"/>
    <property type="match status" value="1"/>
</dbReference>
<dbReference type="PANTHER" id="PTHR20982">
    <property type="entry name" value="RIBOSOME RECYCLING FACTOR"/>
    <property type="match status" value="1"/>
</dbReference>
<dbReference type="Pfam" id="PF01765">
    <property type="entry name" value="RRF"/>
    <property type="match status" value="1"/>
</dbReference>
<dbReference type="SUPFAM" id="SSF55194">
    <property type="entry name" value="Ribosome recycling factor, RRF"/>
    <property type="match status" value="1"/>
</dbReference>
<accession>P68903</accession>
<accession>P82556</accession>
<accession>Q490H0</accession>
<keyword id="KW-0963">Cytoplasm</keyword>
<keyword id="KW-0648">Protein biosynthesis</keyword>
<keyword id="KW-1185">Reference proteome</keyword>
<reference key="1">
    <citation type="journal article" date="2001" name="Proc. Natl. Acad. Sci. U.S.A.">
        <title>Complete genome sequence of an M1 strain of Streptococcus pyogenes.</title>
        <authorList>
            <person name="Ferretti J.J."/>
            <person name="McShan W.M."/>
            <person name="Ajdic D.J."/>
            <person name="Savic D.J."/>
            <person name="Savic G."/>
            <person name="Lyon K."/>
            <person name="Primeaux C."/>
            <person name="Sezate S."/>
            <person name="Suvorov A.N."/>
            <person name="Kenton S."/>
            <person name="Lai H.S."/>
            <person name="Lin S.P."/>
            <person name="Qian Y."/>
            <person name="Jia H.G."/>
            <person name="Najar F.Z."/>
            <person name="Ren Q."/>
            <person name="Zhu H."/>
            <person name="Song L."/>
            <person name="White J."/>
            <person name="Yuan X."/>
            <person name="Clifton S.W."/>
            <person name="Roe B.A."/>
            <person name="McLaughlin R.E."/>
        </authorList>
    </citation>
    <scope>NUCLEOTIDE SEQUENCE [LARGE SCALE GENOMIC DNA]</scope>
    <source>
        <strain>ATCC 700294 / SF370 / Serotype M1</strain>
    </source>
</reference>
<reference key="2">
    <citation type="journal article" date="2005" name="J. Infect. Dis.">
        <title>Evolutionary origin and emergence of a highly successful clone of serotype M1 group A Streptococcus involved multiple horizontal gene transfer events.</title>
        <authorList>
            <person name="Sumby P."/>
            <person name="Porcella S.F."/>
            <person name="Madrigal A.G."/>
            <person name="Barbian K.D."/>
            <person name="Virtaneva K."/>
            <person name="Ricklefs S.M."/>
            <person name="Sturdevant D.E."/>
            <person name="Graham M.R."/>
            <person name="Vuopio-Varkila J."/>
            <person name="Hoe N.P."/>
            <person name="Musser J.M."/>
        </authorList>
    </citation>
    <scope>NUCLEOTIDE SEQUENCE [LARGE SCALE GENOMIC DNA]</scope>
    <source>
        <strain>ATCC BAA-947 / MGAS5005 / Serotype M1</strain>
    </source>
</reference>
<proteinExistence type="inferred from homology"/>
<name>RRF_STRP1</name>
<sequence length="185" mass="20572">MANAIIETAKERFAQSHQSLSREYASIRAGRANASLLDRIQVDYYGAPTPLNQLASITVPEARVLLISPFDKSSIKDIERALNASDLGITPANDGSVIRLVIPALTEETRKELAKEVKKVGENAKIAIRNIRRDAMDDAKKQEKAKEITEDELKTLEKDIQKATDDAIKEIDRMTAEKEKELLSV</sequence>